<evidence type="ECO:0000255" key="1">
    <source>
        <dbReference type="HAMAP-Rule" id="MF_01538"/>
    </source>
</evidence>
<comment type="similarity">
    <text evidence="1">Belongs to the UPF0346 family.</text>
</comment>
<protein>
    <recommendedName>
        <fullName evidence="1">UPF0346 protein lin1971</fullName>
    </recommendedName>
</protein>
<organism>
    <name type="scientific">Listeria innocua serovar 6a (strain ATCC BAA-680 / CLIP 11262)</name>
    <dbReference type="NCBI Taxonomy" id="272626"/>
    <lineage>
        <taxon>Bacteria</taxon>
        <taxon>Bacillati</taxon>
        <taxon>Bacillota</taxon>
        <taxon>Bacilli</taxon>
        <taxon>Bacillales</taxon>
        <taxon>Listeriaceae</taxon>
        <taxon>Listeria</taxon>
    </lineage>
</organism>
<accession>Q92AF1</accession>
<feature type="chain" id="PRO_0000164277" description="UPF0346 protein lin1971">
    <location>
        <begin position="1"/>
        <end position="77"/>
    </location>
</feature>
<sequence length="77" mass="9417">MGRSFYHFLMTYRDPKLTDQKTEFANNAYRDHSFPKQTRNYHILCDYLEFNAPYLPGMSIFDELWEAYLLDEEKNKH</sequence>
<gene>
    <name type="ordered locus">lin1971</name>
</gene>
<name>Y1971_LISIN</name>
<reference key="1">
    <citation type="journal article" date="2001" name="Science">
        <title>Comparative genomics of Listeria species.</title>
        <authorList>
            <person name="Glaser P."/>
            <person name="Frangeul L."/>
            <person name="Buchrieser C."/>
            <person name="Rusniok C."/>
            <person name="Amend A."/>
            <person name="Baquero F."/>
            <person name="Berche P."/>
            <person name="Bloecker H."/>
            <person name="Brandt P."/>
            <person name="Chakraborty T."/>
            <person name="Charbit A."/>
            <person name="Chetouani F."/>
            <person name="Couve E."/>
            <person name="de Daruvar A."/>
            <person name="Dehoux P."/>
            <person name="Domann E."/>
            <person name="Dominguez-Bernal G."/>
            <person name="Duchaud E."/>
            <person name="Durant L."/>
            <person name="Dussurget O."/>
            <person name="Entian K.-D."/>
            <person name="Fsihi H."/>
            <person name="Garcia-del Portillo F."/>
            <person name="Garrido P."/>
            <person name="Gautier L."/>
            <person name="Goebel W."/>
            <person name="Gomez-Lopez N."/>
            <person name="Hain T."/>
            <person name="Hauf J."/>
            <person name="Jackson D."/>
            <person name="Jones L.-M."/>
            <person name="Kaerst U."/>
            <person name="Kreft J."/>
            <person name="Kuhn M."/>
            <person name="Kunst F."/>
            <person name="Kurapkat G."/>
            <person name="Madueno E."/>
            <person name="Maitournam A."/>
            <person name="Mata Vicente J."/>
            <person name="Ng E."/>
            <person name="Nedjari H."/>
            <person name="Nordsiek G."/>
            <person name="Novella S."/>
            <person name="de Pablos B."/>
            <person name="Perez-Diaz J.-C."/>
            <person name="Purcell R."/>
            <person name="Remmel B."/>
            <person name="Rose M."/>
            <person name="Schlueter T."/>
            <person name="Simoes N."/>
            <person name="Tierrez A."/>
            <person name="Vazquez-Boland J.-A."/>
            <person name="Voss H."/>
            <person name="Wehland J."/>
            <person name="Cossart P."/>
        </authorList>
    </citation>
    <scope>NUCLEOTIDE SEQUENCE [LARGE SCALE GENOMIC DNA]</scope>
    <source>
        <strain>ATCC BAA-680 / CLIP 11262</strain>
    </source>
</reference>
<proteinExistence type="inferred from homology"/>
<dbReference type="EMBL" id="AL596170">
    <property type="protein sequence ID" value="CAC97201.1"/>
    <property type="molecule type" value="Genomic_DNA"/>
</dbReference>
<dbReference type="PIR" id="AI1678">
    <property type="entry name" value="AI1678"/>
</dbReference>
<dbReference type="RefSeq" id="WP_003763000.1">
    <property type="nucleotide sequence ID" value="NC_003212.1"/>
</dbReference>
<dbReference type="SMR" id="Q92AF1"/>
<dbReference type="STRING" id="272626.gene:17566329"/>
<dbReference type="KEGG" id="lin:lin1971"/>
<dbReference type="eggNOG" id="COG4479">
    <property type="taxonomic scope" value="Bacteria"/>
</dbReference>
<dbReference type="HOGENOM" id="CLU_177534_1_0_9"/>
<dbReference type="OrthoDB" id="2242851at2"/>
<dbReference type="Proteomes" id="UP000002513">
    <property type="component" value="Chromosome"/>
</dbReference>
<dbReference type="Gene3D" id="1.10.150.260">
    <property type="entry name" value="YozE SAM-like"/>
    <property type="match status" value="1"/>
</dbReference>
<dbReference type="HAMAP" id="MF_01538">
    <property type="entry name" value="UPF0346"/>
    <property type="match status" value="1"/>
</dbReference>
<dbReference type="InterPro" id="IPR010673">
    <property type="entry name" value="UPF0346"/>
</dbReference>
<dbReference type="InterPro" id="IPR023089">
    <property type="entry name" value="YozE_SAM-like"/>
</dbReference>
<dbReference type="InterPro" id="IPR036806">
    <property type="entry name" value="YozE_SAM-like_sf"/>
</dbReference>
<dbReference type="NCBIfam" id="NF010193">
    <property type="entry name" value="PRK13672.1"/>
    <property type="match status" value="1"/>
</dbReference>
<dbReference type="Pfam" id="PF06855">
    <property type="entry name" value="YozE_SAM_like"/>
    <property type="match status" value="1"/>
</dbReference>
<dbReference type="PIRSF" id="PIRSF037262">
    <property type="entry name" value="UCP037262"/>
    <property type="match status" value="1"/>
</dbReference>
<dbReference type="SUPFAM" id="SSF140652">
    <property type="entry name" value="YozE-like"/>
    <property type="match status" value="1"/>
</dbReference>